<reference key="1">
    <citation type="journal article" date="2001" name="Proc. Natl. Acad. Sci. U.S.A.">
        <title>Complete genome sequence of an M1 strain of Streptococcus pyogenes.</title>
        <authorList>
            <person name="Ferretti J.J."/>
            <person name="McShan W.M."/>
            <person name="Ajdic D.J."/>
            <person name="Savic D.J."/>
            <person name="Savic G."/>
            <person name="Lyon K."/>
            <person name="Primeaux C."/>
            <person name="Sezate S."/>
            <person name="Suvorov A.N."/>
            <person name="Kenton S."/>
            <person name="Lai H.S."/>
            <person name="Lin S.P."/>
            <person name="Qian Y."/>
            <person name="Jia H.G."/>
            <person name="Najar F.Z."/>
            <person name="Ren Q."/>
            <person name="Zhu H."/>
            <person name="Song L."/>
            <person name="White J."/>
            <person name="Yuan X."/>
            <person name="Clifton S.W."/>
            <person name="Roe B.A."/>
            <person name="McLaughlin R.E."/>
        </authorList>
    </citation>
    <scope>NUCLEOTIDE SEQUENCE [LARGE SCALE GENOMIC DNA]</scope>
    <source>
        <strain>ATCC 700294 / SF370 / Serotype M1</strain>
    </source>
</reference>
<reference key="2">
    <citation type="journal article" date="2005" name="J. Infect. Dis.">
        <title>Evolutionary origin and emergence of a highly successful clone of serotype M1 group A Streptococcus involved multiple horizontal gene transfer events.</title>
        <authorList>
            <person name="Sumby P."/>
            <person name="Porcella S.F."/>
            <person name="Madrigal A.G."/>
            <person name="Barbian K.D."/>
            <person name="Virtaneva K."/>
            <person name="Ricklefs S.M."/>
            <person name="Sturdevant D.E."/>
            <person name="Graham M.R."/>
            <person name="Vuopio-Varkila J."/>
            <person name="Hoe N.P."/>
            <person name="Musser J.M."/>
        </authorList>
    </citation>
    <scope>NUCLEOTIDE SEQUENCE [LARGE SCALE GENOMIC DNA]</scope>
    <source>
        <strain>ATCC BAA-947 / MGAS5005 / Serotype M1</strain>
    </source>
</reference>
<gene>
    <name type="ordered locus">SPy_0316</name>
    <name type="ordered locus">M5005_Spy0269</name>
</gene>
<dbReference type="EMBL" id="AE004092">
    <property type="protein sequence ID" value="AAK33376.1"/>
    <property type="molecule type" value="Genomic_DNA"/>
</dbReference>
<dbReference type="EMBL" id="CP000017">
    <property type="protein sequence ID" value="AAZ50888.1"/>
    <property type="molecule type" value="Genomic_DNA"/>
</dbReference>
<dbReference type="RefSeq" id="NP_268655.1">
    <property type="nucleotide sequence ID" value="NC_002737.2"/>
</dbReference>
<dbReference type="SMR" id="P67188"/>
<dbReference type="PaxDb" id="1314-HKU360_00308"/>
<dbReference type="KEGG" id="spy:SPy_0316"/>
<dbReference type="KEGG" id="spz:M5005_Spy0269"/>
<dbReference type="PATRIC" id="fig|160490.10.peg.276"/>
<dbReference type="HOGENOM" id="CLU_062974_2_0_9"/>
<dbReference type="OMA" id="NFDIPDE"/>
<dbReference type="Proteomes" id="UP000000750">
    <property type="component" value="Chromosome"/>
</dbReference>
<dbReference type="GO" id="GO:0005829">
    <property type="term" value="C:cytosol"/>
    <property type="evidence" value="ECO:0007669"/>
    <property type="project" value="TreeGrafter"/>
</dbReference>
<dbReference type="GO" id="GO:0003677">
    <property type="term" value="F:DNA binding"/>
    <property type="evidence" value="ECO:0007669"/>
    <property type="project" value="UniProtKB-UniRule"/>
</dbReference>
<dbReference type="GO" id="GO:0006355">
    <property type="term" value="P:regulation of DNA-templated transcription"/>
    <property type="evidence" value="ECO:0007669"/>
    <property type="project" value="UniProtKB-UniRule"/>
</dbReference>
<dbReference type="FunFam" id="1.10.10.200:FF:000003">
    <property type="entry name" value="Probable transcriptional regulatory protein YeeN"/>
    <property type="match status" value="1"/>
</dbReference>
<dbReference type="FunFam" id="3.30.70.980:FF:000004">
    <property type="entry name" value="Probable transcriptional regulatory protein YeeN"/>
    <property type="match status" value="1"/>
</dbReference>
<dbReference type="Gene3D" id="1.10.10.200">
    <property type="match status" value="1"/>
</dbReference>
<dbReference type="Gene3D" id="3.30.70.980">
    <property type="match status" value="2"/>
</dbReference>
<dbReference type="HAMAP" id="MF_00693">
    <property type="entry name" value="Transcrip_reg_TACO1"/>
    <property type="match status" value="1"/>
</dbReference>
<dbReference type="HAMAP" id="MF_00918">
    <property type="entry name" value="Transcrip_reg_TACO1_YeeN"/>
    <property type="match status" value="1"/>
</dbReference>
<dbReference type="InterPro" id="IPR017856">
    <property type="entry name" value="Integrase-like_N"/>
</dbReference>
<dbReference type="InterPro" id="IPR048300">
    <property type="entry name" value="TACO1_YebC-like_2nd/3rd_dom"/>
</dbReference>
<dbReference type="InterPro" id="IPR049083">
    <property type="entry name" value="TACO1_YebC_N"/>
</dbReference>
<dbReference type="InterPro" id="IPR002876">
    <property type="entry name" value="Transcrip_reg_TACO1-like"/>
</dbReference>
<dbReference type="InterPro" id="IPR026564">
    <property type="entry name" value="Transcrip_reg_TACO1-like_dom3"/>
</dbReference>
<dbReference type="InterPro" id="IPR026562">
    <property type="entry name" value="Transcrip_reg_TACO1_YeeN"/>
</dbReference>
<dbReference type="InterPro" id="IPR029072">
    <property type="entry name" value="YebC-like"/>
</dbReference>
<dbReference type="NCBIfam" id="NF001030">
    <property type="entry name" value="PRK00110.1"/>
    <property type="match status" value="1"/>
</dbReference>
<dbReference type="NCBIfam" id="NF009044">
    <property type="entry name" value="PRK12378.1"/>
    <property type="match status" value="1"/>
</dbReference>
<dbReference type="NCBIfam" id="TIGR01033">
    <property type="entry name" value="YebC/PmpR family DNA-binding transcriptional regulator"/>
    <property type="match status" value="1"/>
</dbReference>
<dbReference type="PANTHER" id="PTHR12532">
    <property type="entry name" value="TRANSLATIONAL ACTIVATOR OF CYTOCHROME C OXIDASE 1"/>
    <property type="match status" value="1"/>
</dbReference>
<dbReference type="PANTHER" id="PTHR12532:SF0">
    <property type="entry name" value="TRANSLATIONAL ACTIVATOR OF CYTOCHROME C OXIDASE 1"/>
    <property type="match status" value="1"/>
</dbReference>
<dbReference type="Pfam" id="PF20772">
    <property type="entry name" value="TACO1_YebC_N"/>
    <property type="match status" value="1"/>
</dbReference>
<dbReference type="Pfam" id="PF01709">
    <property type="entry name" value="Transcrip_reg"/>
    <property type="match status" value="1"/>
</dbReference>
<dbReference type="SUPFAM" id="SSF75625">
    <property type="entry name" value="YebC-like"/>
    <property type="match status" value="1"/>
</dbReference>
<feature type="chain" id="PRO_0000175906" description="Probable transcriptional regulatory protein SPy_0316/M5005_Spy0269">
    <location>
        <begin position="1"/>
        <end position="238"/>
    </location>
</feature>
<comment type="subcellular location">
    <subcellularLocation>
        <location evidence="1">Cytoplasm</location>
    </subcellularLocation>
</comment>
<comment type="similarity">
    <text evidence="1">Belongs to the TACO1 family. YeeN subfamily.</text>
</comment>
<protein>
    <recommendedName>
        <fullName evidence="1">Probable transcriptional regulatory protein SPy_0316/M5005_Spy0269</fullName>
    </recommendedName>
</protein>
<name>Y316_STRP1</name>
<sequence>MGRKWANIVAKKTAKDGATSKVYAKFGVEIYVAAKQGEPDPELNTALKFVIDRAKQAQVPKHVIDKAIDKAKGNTDETFVEGRYEGFGPNGSMIIVDTLTSNVNRTAANVRTAYGKNGGNMGASGSVSYLFDKKGVIVFAGDDADSVFEQLLEADVDVDDVEAEEGTITVYTAPTDLHKGIQALRDNGVEEFQVTELEMIPQSEVVLEGDDLETFEKLIDALESDDDVQKVYHNVADF</sequence>
<accession>P67188</accession>
<accession>Q490T0</accession>
<accession>Q9A1E6</accession>
<organism>
    <name type="scientific">Streptococcus pyogenes serotype M1</name>
    <dbReference type="NCBI Taxonomy" id="301447"/>
    <lineage>
        <taxon>Bacteria</taxon>
        <taxon>Bacillati</taxon>
        <taxon>Bacillota</taxon>
        <taxon>Bacilli</taxon>
        <taxon>Lactobacillales</taxon>
        <taxon>Streptococcaceae</taxon>
        <taxon>Streptococcus</taxon>
    </lineage>
</organism>
<proteinExistence type="inferred from homology"/>
<keyword id="KW-0963">Cytoplasm</keyword>
<keyword id="KW-0238">DNA-binding</keyword>
<keyword id="KW-1185">Reference proteome</keyword>
<keyword id="KW-0804">Transcription</keyword>
<keyword id="KW-0805">Transcription regulation</keyword>
<evidence type="ECO:0000255" key="1">
    <source>
        <dbReference type="HAMAP-Rule" id="MF_00918"/>
    </source>
</evidence>